<keyword id="KW-0064">Aspartyl protease</keyword>
<keyword id="KW-1003">Cell membrane</keyword>
<keyword id="KW-0378">Hydrolase</keyword>
<keyword id="KW-0472">Membrane</keyword>
<keyword id="KW-0645">Protease</keyword>
<keyword id="KW-0812">Transmembrane</keyword>
<keyword id="KW-1133">Transmembrane helix</keyword>
<sequence>MRKVAIPVAILALIGLDQWVKHWVVANISLNQVIKAIPGVFSLTYLQNRGAAFSILQNQKYFFVILTVLVIGAALFYLVKNYQKSLWLVLSLILIISGGIGNFIDRVHLGYVVDMVQLDFIDFAIFNVADSYLTVGVLLLILILWKEENGSHH</sequence>
<dbReference type="EC" id="3.4.23.36" evidence="1"/>
<dbReference type="EMBL" id="CP000024">
    <property type="protein sequence ID" value="AAV62118.1"/>
    <property type="molecule type" value="Genomic_DNA"/>
</dbReference>
<dbReference type="RefSeq" id="WP_002946082.1">
    <property type="nucleotide sequence ID" value="NC_006449.1"/>
</dbReference>
<dbReference type="SMR" id="Q5M0X5"/>
<dbReference type="GeneID" id="66898424"/>
<dbReference type="KEGG" id="stc:str0521"/>
<dbReference type="HOGENOM" id="CLU_083252_3_3_9"/>
<dbReference type="UniPathway" id="UPA00665"/>
<dbReference type="GO" id="GO:0005886">
    <property type="term" value="C:plasma membrane"/>
    <property type="evidence" value="ECO:0007669"/>
    <property type="project" value="UniProtKB-SubCell"/>
</dbReference>
<dbReference type="GO" id="GO:0004190">
    <property type="term" value="F:aspartic-type endopeptidase activity"/>
    <property type="evidence" value="ECO:0007669"/>
    <property type="project" value="UniProtKB-UniRule"/>
</dbReference>
<dbReference type="GO" id="GO:0006508">
    <property type="term" value="P:proteolysis"/>
    <property type="evidence" value="ECO:0007669"/>
    <property type="project" value="UniProtKB-KW"/>
</dbReference>
<dbReference type="HAMAP" id="MF_00161">
    <property type="entry name" value="LspA"/>
    <property type="match status" value="1"/>
</dbReference>
<dbReference type="InterPro" id="IPR001872">
    <property type="entry name" value="Peptidase_A8"/>
</dbReference>
<dbReference type="NCBIfam" id="TIGR00077">
    <property type="entry name" value="lspA"/>
    <property type="match status" value="1"/>
</dbReference>
<dbReference type="PANTHER" id="PTHR33695">
    <property type="entry name" value="LIPOPROTEIN SIGNAL PEPTIDASE"/>
    <property type="match status" value="1"/>
</dbReference>
<dbReference type="PANTHER" id="PTHR33695:SF1">
    <property type="entry name" value="LIPOPROTEIN SIGNAL PEPTIDASE"/>
    <property type="match status" value="1"/>
</dbReference>
<dbReference type="Pfam" id="PF01252">
    <property type="entry name" value="Peptidase_A8"/>
    <property type="match status" value="1"/>
</dbReference>
<dbReference type="PRINTS" id="PR00781">
    <property type="entry name" value="LIPOSIGPTASE"/>
</dbReference>
<dbReference type="PROSITE" id="PS00855">
    <property type="entry name" value="SPASE_II"/>
    <property type="match status" value="1"/>
</dbReference>
<comment type="function">
    <text evidence="1">This protein specifically catalyzes the removal of signal peptides from prolipoproteins.</text>
</comment>
<comment type="catalytic activity">
    <reaction evidence="1">
        <text>Release of signal peptides from bacterial membrane prolipoproteins. Hydrolyzes -Xaa-Yaa-Zaa-|-(S,diacylglyceryl)Cys-, in which Xaa is hydrophobic (preferably Leu), and Yaa (Ala or Ser) and Zaa (Gly or Ala) have small, neutral side chains.</text>
        <dbReference type="EC" id="3.4.23.36"/>
    </reaction>
</comment>
<comment type="pathway">
    <text evidence="1">Protein modification; lipoprotein biosynthesis (signal peptide cleavage).</text>
</comment>
<comment type="subcellular location">
    <subcellularLocation>
        <location evidence="1">Cell membrane</location>
        <topology evidence="1">Multi-pass membrane protein</topology>
    </subcellularLocation>
</comment>
<comment type="similarity">
    <text evidence="1">Belongs to the peptidase A8 family.</text>
</comment>
<protein>
    <recommendedName>
        <fullName evidence="1">Lipoprotein signal peptidase</fullName>
        <ecNumber evidence="1">3.4.23.36</ecNumber>
    </recommendedName>
    <alternativeName>
        <fullName evidence="1">Prolipoprotein signal peptidase</fullName>
    </alternativeName>
    <alternativeName>
        <fullName evidence="1">Signal peptidase II</fullName>
        <shortName evidence="1">SPase II</shortName>
    </alternativeName>
</protein>
<organism>
    <name type="scientific">Streptococcus thermophilus (strain CNRZ 1066)</name>
    <dbReference type="NCBI Taxonomy" id="299768"/>
    <lineage>
        <taxon>Bacteria</taxon>
        <taxon>Bacillati</taxon>
        <taxon>Bacillota</taxon>
        <taxon>Bacilli</taxon>
        <taxon>Lactobacillales</taxon>
        <taxon>Streptococcaceae</taxon>
        <taxon>Streptococcus</taxon>
    </lineage>
</organism>
<accession>Q5M0X5</accession>
<proteinExistence type="inferred from homology"/>
<feature type="chain" id="PRO_0000289448" description="Lipoprotein signal peptidase">
    <location>
        <begin position="1"/>
        <end position="153"/>
    </location>
</feature>
<feature type="transmembrane region" description="Helical" evidence="1">
    <location>
        <begin position="61"/>
        <end position="81"/>
    </location>
</feature>
<feature type="transmembrane region" description="Helical" evidence="1">
    <location>
        <begin position="85"/>
        <end position="105"/>
    </location>
</feature>
<feature type="transmembrane region" description="Helical" evidence="1">
    <location>
        <begin position="125"/>
        <end position="145"/>
    </location>
</feature>
<feature type="active site" evidence="1">
    <location>
        <position position="114"/>
    </location>
</feature>
<feature type="active site" evidence="1">
    <location>
        <position position="130"/>
    </location>
</feature>
<name>LSPA_STRT1</name>
<gene>
    <name evidence="1" type="primary">lspA</name>
    <name type="ordered locus">str0521</name>
</gene>
<reference key="1">
    <citation type="journal article" date="2004" name="Nat. Biotechnol.">
        <title>Complete sequence and comparative genome analysis of the dairy bacterium Streptococcus thermophilus.</title>
        <authorList>
            <person name="Bolotin A."/>
            <person name="Quinquis B."/>
            <person name="Renault P."/>
            <person name="Sorokin A."/>
            <person name="Ehrlich S.D."/>
            <person name="Kulakauskas S."/>
            <person name="Lapidus A."/>
            <person name="Goltsman E."/>
            <person name="Mazur M."/>
            <person name="Pusch G.D."/>
            <person name="Fonstein M."/>
            <person name="Overbeek R."/>
            <person name="Kyprides N."/>
            <person name="Purnelle B."/>
            <person name="Prozzi D."/>
            <person name="Ngui K."/>
            <person name="Masuy D."/>
            <person name="Hancy F."/>
            <person name="Burteau S."/>
            <person name="Boutry M."/>
            <person name="Delcour J."/>
            <person name="Goffeau A."/>
            <person name="Hols P."/>
        </authorList>
    </citation>
    <scope>NUCLEOTIDE SEQUENCE [LARGE SCALE GENOMIC DNA]</scope>
    <source>
        <strain>CNRZ 1066</strain>
    </source>
</reference>
<evidence type="ECO:0000255" key="1">
    <source>
        <dbReference type="HAMAP-Rule" id="MF_00161"/>
    </source>
</evidence>